<feature type="transit peptide" description="Mitochondrion" evidence="1">
    <location>
        <begin position="1"/>
        <end position="28"/>
    </location>
</feature>
<feature type="chain" id="PRO_0000413258" description="Glutamyl-tRNA(Gln) amidotransferase subunit B, mitochondrial">
    <location>
        <begin position="29"/>
        <end position="534"/>
    </location>
</feature>
<accession>B0CXE1</accession>
<name>GATB_LACBS</name>
<protein>
    <recommendedName>
        <fullName evidence="1">Glutamyl-tRNA(Gln) amidotransferase subunit B, mitochondrial</fullName>
        <shortName evidence="1">Glu-AdT subunit B</shortName>
        <ecNumber evidence="1">6.3.5.-</ecNumber>
    </recommendedName>
</protein>
<evidence type="ECO:0000255" key="1">
    <source>
        <dbReference type="HAMAP-Rule" id="MF_03147"/>
    </source>
</evidence>
<reference key="1">
    <citation type="journal article" date="2008" name="Nature">
        <title>The genome of Laccaria bicolor provides insights into mycorrhizal symbiosis.</title>
        <authorList>
            <person name="Martin F."/>
            <person name="Aerts A."/>
            <person name="Ahren D."/>
            <person name="Brun A."/>
            <person name="Danchin E.G.J."/>
            <person name="Duchaussoy F."/>
            <person name="Gibon J."/>
            <person name="Kohler A."/>
            <person name="Lindquist E."/>
            <person name="Pereda V."/>
            <person name="Salamov A."/>
            <person name="Shapiro H.J."/>
            <person name="Wuyts J."/>
            <person name="Blaudez D."/>
            <person name="Buee M."/>
            <person name="Brokstein P."/>
            <person name="Canbaeck B."/>
            <person name="Cohen D."/>
            <person name="Courty P.E."/>
            <person name="Coutinho P.M."/>
            <person name="Delaruelle C."/>
            <person name="Detter J.C."/>
            <person name="Deveau A."/>
            <person name="DiFazio S."/>
            <person name="Duplessis S."/>
            <person name="Fraissinet-Tachet L."/>
            <person name="Lucic E."/>
            <person name="Frey-Klett P."/>
            <person name="Fourrey C."/>
            <person name="Feussner I."/>
            <person name="Gay G."/>
            <person name="Grimwood J."/>
            <person name="Hoegger P.J."/>
            <person name="Jain P."/>
            <person name="Kilaru S."/>
            <person name="Labbe J."/>
            <person name="Lin Y.C."/>
            <person name="Legue V."/>
            <person name="Le Tacon F."/>
            <person name="Marmeisse R."/>
            <person name="Melayah D."/>
            <person name="Montanini B."/>
            <person name="Muratet M."/>
            <person name="Nehls U."/>
            <person name="Niculita-Hirzel H."/>
            <person name="Oudot-Le Secq M.P."/>
            <person name="Peter M."/>
            <person name="Quesneville H."/>
            <person name="Rajashekar B."/>
            <person name="Reich M."/>
            <person name="Rouhier N."/>
            <person name="Schmutz J."/>
            <person name="Yin T."/>
            <person name="Chalot M."/>
            <person name="Henrissat B."/>
            <person name="Kuees U."/>
            <person name="Lucas S."/>
            <person name="Van de Peer Y."/>
            <person name="Podila G.K."/>
            <person name="Polle A."/>
            <person name="Pukkila P.J."/>
            <person name="Richardson P.M."/>
            <person name="Rouze P."/>
            <person name="Sanders I.R."/>
            <person name="Stajich J.E."/>
            <person name="Tunlid A."/>
            <person name="Tuskan G."/>
            <person name="Grigoriev I.V."/>
        </authorList>
    </citation>
    <scope>NUCLEOTIDE SEQUENCE [LARGE SCALE GENOMIC DNA]</scope>
    <source>
        <strain>S238N-H82 / ATCC MYA-4686</strain>
    </source>
</reference>
<gene>
    <name type="ORF">LACBIDRAFT_231681</name>
</gene>
<proteinExistence type="inferred from homology"/>
<dbReference type="EC" id="6.3.5.-" evidence="1"/>
<dbReference type="EMBL" id="DS547094">
    <property type="protein sequence ID" value="EDR12709.1"/>
    <property type="molecule type" value="Genomic_DNA"/>
</dbReference>
<dbReference type="RefSeq" id="XP_001876973.1">
    <property type="nucleotide sequence ID" value="XM_001876938.1"/>
</dbReference>
<dbReference type="SMR" id="B0CXE1"/>
<dbReference type="FunCoup" id="B0CXE1">
    <property type="interactions" value="278"/>
</dbReference>
<dbReference type="STRING" id="486041.B0CXE1"/>
<dbReference type="GeneID" id="6072856"/>
<dbReference type="KEGG" id="lbc:LACBIDRAFT_231681"/>
<dbReference type="HOGENOM" id="CLU_019240_4_0_1"/>
<dbReference type="InParanoid" id="B0CXE1"/>
<dbReference type="OrthoDB" id="1722066at2759"/>
<dbReference type="Proteomes" id="UP000001194">
    <property type="component" value="Unassembled WGS sequence"/>
</dbReference>
<dbReference type="GO" id="GO:0030956">
    <property type="term" value="C:glutamyl-tRNA(Gln) amidotransferase complex"/>
    <property type="evidence" value="ECO:0007669"/>
    <property type="project" value="UniProtKB-UniRule"/>
</dbReference>
<dbReference type="GO" id="GO:0005739">
    <property type="term" value="C:mitochondrion"/>
    <property type="evidence" value="ECO:0007669"/>
    <property type="project" value="UniProtKB-SubCell"/>
</dbReference>
<dbReference type="GO" id="GO:0005524">
    <property type="term" value="F:ATP binding"/>
    <property type="evidence" value="ECO:0007669"/>
    <property type="project" value="UniProtKB-KW"/>
</dbReference>
<dbReference type="GO" id="GO:0050567">
    <property type="term" value="F:glutaminyl-tRNA synthase (glutamine-hydrolyzing) activity"/>
    <property type="evidence" value="ECO:0007669"/>
    <property type="project" value="UniProtKB-UniRule"/>
</dbReference>
<dbReference type="GO" id="GO:0070681">
    <property type="term" value="P:glutaminyl-tRNAGln biosynthesis via transamidation"/>
    <property type="evidence" value="ECO:0007669"/>
    <property type="project" value="UniProtKB-UniRule"/>
</dbReference>
<dbReference type="GO" id="GO:0032543">
    <property type="term" value="P:mitochondrial translation"/>
    <property type="evidence" value="ECO:0007669"/>
    <property type="project" value="UniProtKB-UniRule"/>
</dbReference>
<dbReference type="Gene3D" id="1.10.10.410">
    <property type="match status" value="1"/>
</dbReference>
<dbReference type="HAMAP" id="MF_00121">
    <property type="entry name" value="GatB"/>
    <property type="match status" value="1"/>
</dbReference>
<dbReference type="InterPro" id="IPR017959">
    <property type="entry name" value="Asn/Gln-tRNA_amidoTrfase_suB/E"/>
</dbReference>
<dbReference type="InterPro" id="IPR006075">
    <property type="entry name" value="Asn/Gln-tRNA_Trfase_suB/E_cat"/>
</dbReference>
<dbReference type="InterPro" id="IPR018027">
    <property type="entry name" value="Asn/Gln_amidotransferase"/>
</dbReference>
<dbReference type="InterPro" id="IPR003789">
    <property type="entry name" value="Asn/Gln_tRNA_amidoTrase-B-like"/>
</dbReference>
<dbReference type="InterPro" id="IPR004413">
    <property type="entry name" value="GatB"/>
</dbReference>
<dbReference type="InterPro" id="IPR023168">
    <property type="entry name" value="GatB_Yqey_C_2"/>
</dbReference>
<dbReference type="InterPro" id="IPR017958">
    <property type="entry name" value="Gln-tRNA_amidoTrfase_suB_CS"/>
</dbReference>
<dbReference type="InterPro" id="IPR014746">
    <property type="entry name" value="Gln_synth/guanido_kin_cat_dom"/>
</dbReference>
<dbReference type="NCBIfam" id="TIGR00133">
    <property type="entry name" value="gatB"/>
    <property type="match status" value="1"/>
</dbReference>
<dbReference type="NCBIfam" id="NF004012">
    <property type="entry name" value="PRK05477.1-2"/>
    <property type="match status" value="1"/>
</dbReference>
<dbReference type="NCBIfam" id="NF004014">
    <property type="entry name" value="PRK05477.1-4"/>
    <property type="match status" value="1"/>
</dbReference>
<dbReference type="PANTHER" id="PTHR11659">
    <property type="entry name" value="GLUTAMYL-TRNA GLN AMIDOTRANSFERASE SUBUNIT B MITOCHONDRIAL AND PROKARYOTIC PET112-RELATED"/>
    <property type="match status" value="1"/>
</dbReference>
<dbReference type="PANTHER" id="PTHR11659:SF0">
    <property type="entry name" value="GLUTAMYL-TRNA(GLN) AMIDOTRANSFERASE SUBUNIT B, MITOCHONDRIAL"/>
    <property type="match status" value="1"/>
</dbReference>
<dbReference type="Pfam" id="PF02934">
    <property type="entry name" value="GatB_N"/>
    <property type="match status" value="1"/>
</dbReference>
<dbReference type="Pfam" id="PF02637">
    <property type="entry name" value="GatB_Yqey"/>
    <property type="match status" value="1"/>
</dbReference>
<dbReference type="SMART" id="SM00845">
    <property type="entry name" value="GatB_Yqey"/>
    <property type="match status" value="1"/>
</dbReference>
<dbReference type="SUPFAM" id="SSF89095">
    <property type="entry name" value="GatB/YqeY motif"/>
    <property type="match status" value="2"/>
</dbReference>
<dbReference type="SUPFAM" id="SSF55931">
    <property type="entry name" value="Glutamine synthetase/guanido kinase"/>
    <property type="match status" value="1"/>
</dbReference>
<dbReference type="PROSITE" id="PS01234">
    <property type="entry name" value="GATB"/>
    <property type="match status" value="1"/>
</dbReference>
<organism>
    <name type="scientific">Laccaria bicolor (strain S238N-H82 / ATCC MYA-4686)</name>
    <name type="common">Bicoloured deceiver</name>
    <name type="synonym">Laccaria laccata var. bicolor</name>
    <dbReference type="NCBI Taxonomy" id="486041"/>
    <lineage>
        <taxon>Eukaryota</taxon>
        <taxon>Fungi</taxon>
        <taxon>Dikarya</taxon>
        <taxon>Basidiomycota</taxon>
        <taxon>Agaricomycotina</taxon>
        <taxon>Agaricomycetes</taxon>
        <taxon>Agaricomycetidae</taxon>
        <taxon>Agaricales</taxon>
        <taxon>Agaricineae</taxon>
        <taxon>Hydnangiaceae</taxon>
        <taxon>Laccaria</taxon>
    </lineage>
</organism>
<keyword id="KW-0067">ATP-binding</keyword>
<keyword id="KW-0436">Ligase</keyword>
<keyword id="KW-0496">Mitochondrion</keyword>
<keyword id="KW-0547">Nucleotide-binding</keyword>
<keyword id="KW-0648">Protein biosynthesis</keyword>
<keyword id="KW-1185">Reference proteome</keyword>
<keyword id="KW-0809">Transit peptide</keyword>
<comment type="function">
    <text evidence="1">Allows the formation of correctly charged Gln-tRNA(Gln) through the transamidation of misacylated Glu-tRNA(Gln) in the mitochondria. The reaction takes place in the presence of glutamine and ATP through an activated gamma-phospho-Glu-tRNA(Gln).</text>
</comment>
<comment type="catalytic activity">
    <reaction evidence="1">
        <text>L-glutamyl-tRNA(Gln) + L-glutamine + ATP + H2O = L-glutaminyl-tRNA(Gln) + L-glutamate + ADP + phosphate + H(+)</text>
        <dbReference type="Rhea" id="RHEA:17521"/>
        <dbReference type="Rhea" id="RHEA-COMP:9681"/>
        <dbReference type="Rhea" id="RHEA-COMP:9684"/>
        <dbReference type="ChEBI" id="CHEBI:15377"/>
        <dbReference type="ChEBI" id="CHEBI:15378"/>
        <dbReference type="ChEBI" id="CHEBI:29985"/>
        <dbReference type="ChEBI" id="CHEBI:30616"/>
        <dbReference type="ChEBI" id="CHEBI:43474"/>
        <dbReference type="ChEBI" id="CHEBI:58359"/>
        <dbReference type="ChEBI" id="CHEBI:78520"/>
        <dbReference type="ChEBI" id="CHEBI:78521"/>
        <dbReference type="ChEBI" id="CHEBI:456216"/>
    </reaction>
</comment>
<comment type="subunit">
    <text evidence="1">Subunit of the heterotrimeric GatCAB amidotransferase (AdT) complex, composed of A, B and C subunits.</text>
</comment>
<comment type="subcellular location">
    <subcellularLocation>
        <location evidence="1">Mitochondrion</location>
    </subcellularLocation>
</comment>
<comment type="similarity">
    <text evidence="1">Belongs to the GatB/GatE family. GatB subfamily.</text>
</comment>
<sequence length="534" mass="59296">MTVLCRLRHCHLSTPTLCRRFHDARVYKEDKRWPGWQVVVGIETHAQIKSRRKLFSGKITGTNPDEPPNKHVSPFDAAFPGTLPKLNSKCVDLAIRTALALKSDIQHRSSFDRKHYFYSDLPSGYQITQQYAPIALRGQLNIQMPNSSAVPVRIKQIQLEQDTAKSTLNPRKRISNIDLNRAGAGLMEIVSEPDLRSPEEAGMFVRTLQAVLRAIGASDGNMEQGSLRCDVNVSVNRVGRPPGTRCEIKNLNSVKFMMAAITHEIIRQRAILESASDLETCTVPQETRGFDENTFETYRLRSKEDAPDYRYMPDPNLGVLVLSQDRVQAIRDSLPELPWETRHRLREMYALSERDIDVLLSVDSGREVTFDGEKDVDGSGAVAMTHELLGQLSARKETFTDNSLTSDHLGELIDLVQNGTITGTSGKYLLRHMLAKPSSLRPAQITQQLRLTSLSSFSSSGHSNPTSTTDQELTTLCQAAITALPNEVAAVRAGNKNVMNKIVGRVMRESRGRADAKGVKALVEELILGGGDKS</sequence>